<feature type="chain" id="PRO_1000116768" description="Elongation factor Ts">
    <location>
        <begin position="1"/>
        <end position="277"/>
    </location>
</feature>
<feature type="region of interest" description="Involved in Mg(2+) ion dislocation from EF-Tu" evidence="1">
    <location>
        <begin position="79"/>
        <end position="82"/>
    </location>
</feature>
<accession>B1VA79</accession>
<protein>
    <recommendedName>
        <fullName evidence="1">Elongation factor Ts</fullName>
        <shortName evidence="1">EF-Ts</shortName>
    </recommendedName>
</protein>
<comment type="function">
    <text evidence="1">Associates with the EF-Tu.GDP complex and induces the exchange of GDP to GTP. It remains bound to the aminoacyl-tRNA.EF-Tu.GTP complex up to the GTP hydrolysis stage on the ribosome.</text>
</comment>
<comment type="subcellular location">
    <subcellularLocation>
        <location evidence="1">Cytoplasm</location>
    </subcellularLocation>
</comment>
<comment type="similarity">
    <text evidence="1">Belongs to the EF-Ts family.</text>
</comment>
<keyword id="KW-0963">Cytoplasm</keyword>
<keyword id="KW-0251">Elongation factor</keyword>
<keyword id="KW-0648">Protein biosynthesis</keyword>
<keyword id="KW-1185">Reference proteome</keyword>
<sequence length="277" mass="32010">MKITAEMIKELRQQTHAGMIACKQALEKTEGNLQKAIVFLREKGIVKASQKQDRTTSEGLINIVFSQNDAFLYELNSETDFVAKNEHFQQLMKTIGEVILQNKLQSVDEVLTFNYQNKTIQDLLLEKTSILGEKITLKRILKVTKKEEEIFGTYKHQGGRISVLVVLENNHPSIAEDIAMHIAAFNPKFLNPDKVNLQFLTTEKNILQKQTEKQLLEEKKPLHILDKIVQNRLNKLLKEICLSEQPFVKNNEQKVKDYLQNNNTNVVSYFRWSIANQ</sequence>
<name>EFTS_PHYAS</name>
<reference key="1">
    <citation type="journal article" date="2008" name="J. Bacteriol.">
        <title>Comparative genome analysis of 'Candidatus Phytoplasma australiense' (subgroup tuf-Australia I; rp-A) and 'Ca. Phytoplasma asteris' strains OY-M and AY-WB.</title>
        <authorList>
            <person name="Tran-Nguyen L.T."/>
            <person name="Kube M."/>
            <person name="Schneider B."/>
            <person name="Reinhardt R."/>
            <person name="Gibb K.S."/>
        </authorList>
    </citation>
    <scope>NUCLEOTIDE SEQUENCE [LARGE SCALE GENOMIC DNA]</scope>
</reference>
<organism>
    <name type="scientific">Phytoplasma australiense</name>
    <dbReference type="NCBI Taxonomy" id="59748"/>
    <lineage>
        <taxon>Bacteria</taxon>
        <taxon>Bacillati</taxon>
        <taxon>Mycoplasmatota</taxon>
        <taxon>Mollicutes</taxon>
        <taxon>Acholeplasmatales</taxon>
        <taxon>Acholeplasmataceae</taxon>
        <taxon>Candidatus Phytoplasma</taxon>
        <taxon>16SrXII (Stolbur group)</taxon>
    </lineage>
</organism>
<gene>
    <name evidence="1" type="primary">tsf</name>
    <name type="ordered locus">PA0518</name>
</gene>
<evidence type="ECO:0000255" key="1">
    <source>
        <dbReference type="HAMAP-Rule" id="MF_00050"/>
    </source>
</evidence>
<dbReference type="EMBL" id="AM422018">
    <property type="protein sequence ID" value="CAM11852.1"/>
    <property type="molecule type" value="Genomic_DNA"/>
</dbReference>
<dbReference type="SMR" id="B1VA79"/>
<dbReference type="STRING" id="59748.PA0518"/>
<dbReference type="KEGG" id="pal:PA0518"/>
<dbReference type="eggNOG" id="COG0264">
    <property type="taxonomic scope" value="Bacteria"/>
</dbReference>
<dbReference type="Proteomes" id="UP000008323">
    <property type="component" value="Chromosome"/>
</dbReference>
<dbReference type="GO" id="GO:0005737">
    <property type="term" value="C:cytoplasm"/>
    <property type="evidence" value="ECO:0007669"/>
    <property type="project" value="UniProtKB-SubCell"/>
</dbReference>
<dbReference type="GO" id="GO:0003746">
    <property type="term" value="F:translation elongation factor activity"/>
    <property type="evidence" value="ECO:0007669"/>
    <property type="project" value="UniProtKB-UniRule"/>
</dbReference>
<dbReference type="CDD" id="cd14275">
    <property type="entry name" value="UBA_EF-Ts"/>
    <property type="match status" value="1"/>
</dbReference>
<dbReference type="FunFam" id="1.10.8.10:FF:000001">
    <property type="entry name" value="Elongation factor Ts"/>
    <property type="match status" value="1"/>
</dbReference>
<dbReference type="Gene3D" id="1.10.286.20">
    <property type="match status" value="1"/>
</dbReference>
<dbReference type="Gene3D" id="1.10.8.10">
    <property type="entry name" value="DNA helicase RuvA subunit, C-terminal domain"/>
    <property type="match status" value="1"/>
</dbReference>
<dbReference type="Gene3D" id="3.30.479.20">
    <property type="entry name" value="Elongation factor Ts, dimerisation domain"/>
    <property type="match status" value="2"/>
</dbReference>
<dbReference type="HAMAP" id="MF_00050">
    <property type="entry name" value="EF_Ts"/>
    <property type="match status" value="1"/>
</dbReference>
<dbReference type="InterPro" id="IPR036402">
    <property type="entry name" value="EF-Ts_dimer_sf"/>
</dbReference>
<dbReference type="InterPro" id="IPR001816">
    <property type="entry name" value="Transl_elong_EFTs/EF1B"/>
</dbReference>
<dbReference type="InterPro" id="IPR014039">
    <property type="entry name" value="Transl_elong_EFTs/EF1B_dimer"/>
</dbReference>
<dbReference type="InterPro" id="IPR018101">
    <property type="entry name" value="Transl_elong_Ts_CS"/>
</dbReference>
<dbReference type="InterPro" id="IPR009060">
    <property type="entry name" value="UBA-like_sf"/>
</dbReference>
<dbReference type="NCBIfam" id="TIGR00116">
    <property type="entry name" value="tsf"/>
    <property type="match status" value="1"/>
</dbReference>
<dbReference type="PANTHER" id="PTHR11741">
    <property type="entry name" value="ELONGATION FACTOR TS"/>
    <property type="match status" value="1"/>
</dbReference>
<dbReference type="PANTHER" id="PTHR11741:SF0">
    <property type="entry name" value="ELONGATION FACTOR TS, MITOCHONDRIAL"/>
    <property type="match status" value="1"/>
</dbReference>
<dbReference type="Pfam" id="PF00889">
    <property type="entry name" value="EF_TS"/>
    <property type="match status" value="1"/>
</dbReference>
<dbReference type="SUPFAM" id="SSF54713">
    <property type="entry name" value="Elongation factor Ts (EF-Ts), dimerisation domain"/>
    <property type="match status" value="1"/>
</dbReference>
<dbReference type="SUPFAM" id="SSF46934">
    <property type="entry name" value="UBA-like"/>
    <property type="match status" value="1"/>
</dbReference>
<dbReference type="PROSITE" id="PS01127">
    <property type="entry name" value="EF_TS_2"/>
    <property type="match status" value="1"/>
</dbReference>
<proteinExistence type="inferred from homology"/>